<accession>Q5HQW7</accession>
<proteinExistence type="inferred from homology"/>
<dbReference type="EC" id="2.5.1.145" evidence="1"/>
<dbReference type="EMBL" id="CP000029">
    <property type="protein sequence ID" value="AAW53851.1"/>
    <property type="molecule type" value="Genomic_DNA"/>
</dbReference>
<dbReference type="RefSeq" id="WP_001829638.1">
    <property type="nucleotide sequence ID" value="NC_002976.3"/>
</dbReference>
<dbReference type="SMR" id="Q5HQW7"/>
<dbReference type="STRING" id="176279.SERP0429"/>
<dbReference type="GeneID" id="50019309"/>
<dbReference type="KEGG" id="ser:SERP0429"/>
<dbReference type="eggNOG" id="COG0682">
    <property type="taxonomic scope" value="Bacteria"/>
</dbReference>
<dbReference type="HOGENOM" id="CLU_013386_0_1_9"/>
<dbReference type="UniPathway" id="UPA00664"/>
<dbReference type="Proteomes" id="UP000000531">
    <property type="component" value="Chromosome"/>
</dbReference>
<dbReference type="GO" id="GO:0005886">
    <property type="term" value="C:plasma membrane"/>
    <property type="evidence" value="ECO:0007669"/>
    <property type="project" value="UniProtKB-SubCell"/>
</dbReference>
<dbReference type="GO" id="GO:0008961">
    <property type="term" value="F:phosphatidylglycerol-prolipoprotein diacylglyceryl transferase activity"/>
    <property type="evidence" value="ECO:0007669"/>
    <property type="project" value="UniProtKB-UniRule"/>
</dbReference>
<dbReference type="GO" id="GO:0042158">
    <property type="term" value="P:lipoprotein biosynthetic process"/>
    <property type="evidence" value="ECO:0007669"/>
    <property type="project" value="UniProtKB-UniRule"/>
</dbReference>
<dbReference type="HAMAP" id="MF_01147">
    <property type="entry name" value="Lgt"/>
    <property type="match status" value="1"/>
</dbReference>
<dbReference type="InterPro" id="IPR001640">
    <property type="entry name" value="Lgt"/>
</dbReference>
<dbReference type="NCBIfam" id="TIGR00544">
    <property type="entry name" value="lgt"/>
    <property type="match status" value="1"/>
</dbReference>
<dbReference type="PANTHER" id="PTHR30589:SF0">
    <property type="entry name" value="PHOSPHATIDYLGLYCEROL--PROLIPOPROTEIN DIACYLGLYCERYL TRANSFERASE"/>
    <property type="match status" value="1"/>
</dbReference>
<dbReference type="PANTHER" id="PTHR30589">
    <property type="entry name" value="PROLIPOPROTEIN DIACYLGLYCERYL TRANSFERASE"/>
    <property type="match status" value="1"/>
</dbReference>
<dbReference type="Pfam" id="PF01790">
    <property type="entry name" value="LGT"/>
    <property type="match status" value="1"/>
</dbReference>
<dbReference type="PROSITE" id="PS01311">
    <property type="entry name" value="LGT"/>
    <property type="match status" value="1"/>
</dbReference>
<sequence length="279" mass="31818">MNITLGYIDPVAFSLGPIQVRWYGIIIACGILLGYFIAQAALKQVGLHKDTLIDIIFYSAIVGFIVARIYFVTFQWPYYMNHLSEIPKIWHGGIAIHGGLIGGLISGIIVCKIKNLHPFQIGDIVAPSIILAQGIGRWGNFMNHEAHGGPVSRAFLEHLHLPDFIIRNMYIEGQYYHPTFLYESIWDVIGFVILITLRKRLKLGETFFGYLIWYSVGRFFVEAMRTDSLMLTSHIRVAQLVSVVLIMISVIFVIYRRVKYQPIKYENSGPLTWPIKKAK</sequence>
<gene>
    <name evidence="1" type="primary">lgt</name>
    <name type="ordered locus">SERP0429</name>
</gene>
<evidence type="ECO:0000255" key="1">
    <source>
        <dbReference type="HAMAP-Rule" id="MF_01147"/>
    </source>
</evidence>
<organism>
    <name type="scientific">Staphylococcus epidermidis (strain ATCC 35984 / DSM 28319 / BCRC 17069 / CCUG 31568 / BM 3577 / RP62A)</name>
    <dbReference type="NCBI Taxonomy" id="176279"/>
    <lineage>
        <taxon>Bacteria</taxon>
        <taxon>Bacillati</taxon>
        <taxon>Bacillota</taxon>
        <taxon>Bacilli</taxon>
        <taxon>Bacillales</taxon>
        <taxon>Staphylococcaceae</taxon>
        <taxon>Staphylococcus</taxon>
    </lineage>
</organism>
<comment type="function">
    <text evidence="1">Catalyzes the transfer of the diacylglyceryl group from phosphatidylglycerol to the sulfhydryl group of the N-terminal cysteine of a prolipoprotein, the first step in the formation of mature lipoproteins.</text>
</comment>
<comment type="catalytic activity">
    <reaction evidence="1">
        <text>L-cysteinyl-[prolipoprotein] + a 1,2-diacyl-sn-glycero-3-phospho-(1'-sn-glycerol) = an S-1,2-diacyl-sn-glyceryl-L-cysteinyl-[prolipoprotein] + sn-glycerol 1-phosphate + H(+)</text>
        <dbReference type="Rhea" id="RHEA:56712"/>
        <dbReference type="Rhea" id="RHEA-COMP:14679"/>
        <dbReference type="Rhea" id="RHEA-COMP:14680"/>
        <dbReference type="ChEBI" id="CHEBI:15378"/>
        <dbReference type="ChEBI" id="CHEBI:29950"/>
        <dbReference type="ChEBI" id="CHEBI:57685"/>
        <dbReference type="ChEBI" id="CHEBI:64716"/>
        <dbReference type="ChEBI" id="CHEBI:140658"/>
        <dbReference type="EC" id="2.5.1.145"/>
    </reaction>
</comment>
<comment type="pathway">
    <text evidence="1">Protein modification; lipoprotein biosynthesis (diacylglyceryl transfer).</text>
</comment>
<comment type="subcellular location">
    <subcellularLocation>
        <location evidence="1">Cell membrane</location>
        <topology evidence="1">Multi-pass membrane protein</topology>
    </subcellularLocation>
</comment>
<comment type="similarity">
    <text evidence="1">Belongs to the Lgt family.</text>
</comment>
<reference key="1">
    <citation type="journal article" date="2005" name="J. Bacteriol.">
        <title>Insights on evolution of virulence and resistance from the complete genome analysis of an early methicillin-resistant Staphylococcus aureus strain and a biofilm-producing methicillin-resistant Staphylococcus epidermidis strain.</title>
        <authorList>
            <person name="Gill S.R."/>
            <person name="Fouts D.E."/>
            <person name="Archer G.L."/>
            <person name="Mongodin E.F."/>
            <person name="DeBoy R.T."/>
            <person name="Ravel J."/>
            <person name="Paulsen I.T."/>
            <person name="Kolonay J.F."/>
            <person name="Brinkac L.M."/>
            <person name="Beanan M.J."/>
            <person name="Dodson R.J."/>
            <person name="Daugherty S.C."/>
            <person name="Madupu R."/>
            <person name="Angiuoli S.V."/>
            <person name="Durkin A.S."/>
            <person name="Haft D.H."/>
            <person name="Vamathevan J.J."/>
            <person name="Khouri H."/>
            <person name="Utterback T.R."/>
            <person name="Lee C."/>
            <person name="Dimitrov G."/>
            <person name="Jiang L."/>
            <person name="Qin H."/>
            <person name="Weidman J."/>
            <person name="Tran K."/>
            <person name="Kang K.H."/>
            <person name="Hance I.R."/>
            <person name="Nelson K.E."/>
            <person name="Fraser C.M."/>
        </authorList>
    </citation>
    <scope>NUCLEOTIDE SEQUENCE [LARGE SCALE GENOMIC DNA]</scope>
    <source>
        <strain>ATCC 35984 / DSM 28319 / BCRC 17069 / CCUG 31568 / BM 3577 / RP62A</strain>
    </source>
</reference>
<protein>
    <recommendedName>
        <fullName evidence="1">Phosphatidylglycerol--prolipoprotein diacylglyceryl transferase</fullName>
        <ecNumber evidence="1">2.5.1.145</ecNumber>
    </recommendedName>
</protein>
<keyword id="KW-1003">Cell membrane</keyword>
<keyword id="KW-0472">Membrane</keyword>
<keyword id="KW-1185">Reference proteome</keyword>
<keyword id="KW-0808">Transferase</keyword>
<keyword id="KW-0812">Transmembrane</keyword>
<keyword id="KW-1133">Transmembrane helix</keyword>
<name>LGT_STAEQ</name>
<feature type="chain" id="PRO_0000172680" description="Phosphatidylglycerol--prolipoprotein diacylglyceryl transferase">
    <location>
        <begin position="1"/>
        <end position="279"/>
    </location>
</feature>
<feature type="transmembrane region" description="Helical" evidence="1">
    <location>
        <begin position="22"/>
        <end position="42"/>
    </location>
</feature>
<feature type="transmembrane region" description="Helical" evidence="1">
    <location>
        <begin position="52"/>
        <end position="72"/>
    </location>
</feature>
<feature type="transmembrane region" description="Helical" evidence="1">
    <location>
        <begin position="89"/>
        <end position="109"/>
    </location>
</feature>
<feature type="transmembrane region" description="Helical" evidence="1">
    <location>
        <begin position="203"/>
        <end position="223"/>
    </location>
</feature>
<feature type="transmembrane region" description="Helical" evidence="1">
    <location>
        <begin position="235"/>
        <end position="255"/>
    </location>
</feature>
<feature type="binding site" evidence="1">
    <location>
        <position position="137"/>
    </location>
    <ligand>
        <name>a 1,2-diacyl-sn-glycero-3-phospho-(1'-sn-glycerol)</name>
        <dbReference type="ChEBI" id="CHEBI:64716"/>
    </ligand>
</feature>